<geneLocation type="chloroplast"/>
<feature type="chain" id="PRO_0000276293" description="Photosystem II reaction center protein T">
    <location>
        <begin position="1"/>
        <end position="35"/>
    </location>
</feature>
<feature type="transmembrane region" description="Helical" evidence="1">
    <location>
        <begin position="3"/>
        <end position="23"/>
    </location>
</feature>
<gene>
    <name evidence="1" type="primary">psbT</name>
</gene>
<keyword id="KW-0150">Chloroplast</keyword>
<keyword id="KW-0472">Membrane</keyword>
<keyword id="KW-0602">Photosynthesis</keyword>
<keyword id="KW-0604">Photosystem II</keyword>
<keyword id="KW-0934">Plastid</keyword>
<keyword id="KW-0793">Thylakoid</keyword>
<keyword id="KW-0812">Transmembrane</keyword>
<keyword id="KW-1133">Transmembrane helix</keyword>
<reference key="1">
    <citation type="journal article" date="2006" name="BMC Evol. Biol.">
        <title>Complete plastid genome sequences of Drimys, Liriodendron, and Piper: implications for the phylogenetic relationships of magnoliids.</title>
        <authorList>
            <person name="Cai Z."/>
            <person name="Penaflor C."/>
            <person name="Kuehl J.V."/>
            <person name="Leebens-Mack J."/>
            <person name="Carlson J.E."/>
            <person name="dePamphilis C.W."/>
            <person name="Boore J.L."/>
            <person name="Jansen R.K."/>
        </authorList>
    </citation>
    <scope>NUCLEOTIDE SEQUENCE [LARGE SCALE GENOMIC DNA]</scope>
</reference>
<protein>
    <recommendedName>
        <fullName evidence="1">Photosystem II reaction center protein T</fullName>
        <shortName evidence="1">PSII-T</shortName>
    </recommendedName>
</protein>
<sequence>MEALVYTFLLVSTLGIIFFAIFFREPPKVPTKRMK</sequence>
<proteinExistence type="inferred from homology"/>
<organism>
    <name type="scientific">Drimys granadensis</name>
    <dbReference type="NCBI Taxonomy" id="224735"/>
    <lineage>
        <taxon>Eukaryota</taxon>
        <taxon>Viridiplantae</taxon>
        <taxon>Streptophyta</taxon>
        <taxon>Embryophyta</taxon>
        <taxon>Tracheophyta</taxon>
        <taxon>Spermatophyta</taxon>
        <taxon>Magnoliopsida</taxon>
        <taxon>Magnoliidae</taxon>
        <taxon>Canellales</taxon>
        <taxon>Winteraceae</taxon>
        <taxon>Drimys</taxon>
    </lineage>
</organism>
<dbReference type="EMBL" id="DQ887676">
    <property type="protein sequence ID" value="ABH88323.1"/>
    <property type="molecule type" value="Genomic_DNA"/>
</dbReference>
<dbReference type="RefSeq" id="YP_784413.1">
    <property type="nucleotide sequence ID" value="NC_008456.1"/>
</dbReference>
<dbReference type="SMR" id="Q06GX0"/>
<dbReference type="GeneID" id="4363599"/>
<dbReference type="GO" id="GO:0009535">
    <property type="term" value="C:chloroplast thylakoid membrane"/>
    <property type="evidence" value="ECO:0007669"/>
    <property type="project" value="UniProtKB-SubCell"/>
</dbReference>
<dbReference type="GO" id="GO:0009539">
    <property type="term" value="C:photosystem II reaction center"/>
    <property type="evidence" value="ECO:0007669"/>
    <property type="project" value="InterPro"/>
</dbReference>
<dbReference type="GO" id="GO:0015979">
    <property type="term" value="P:photosynthesis"/>
    <property type="evidence" value="ECO:0007669"/>
    <property type="project" value="UniProtKB-UniRule"/>
</dbReference>
<dbReference type="HAMAP" id="MF_00808">
    <property type="entry name" value="PSII_PsbT"/>
    <property type="match status" value="1"/>
</dbReference>
<dbReference type="InterPro" id="IPR001743">
    <property type="entry name" value="PSII_PsbT"/>
</dbReference>
<dbReference type="InterPro" id="IPR037268">
    <property type="entry name" value="PSII_PsbT_sf"/>
</dbReference>
<dbReference type="PANTHER" id="PTHR36411">
    <property type="match status" value="1"/>
</dbReference>
<dbReference type="PANTHER" id="PTHR36411:SF2">
    <property type="entry name" value="PHOTOSYSTEM II REACTION CENTER PROTEIN T"/>
    <property type="match status" value="1"/>
</dbReference>
<dbReference type="Pfam" id="PF01405">
    <property type="entry name" value="PsbT"/>
    <property type="match status" value="1"/>
</dbReference>
<dbReference type="SUPFAM" id="SSF161029">
    <property type="entry name" value="Photosystem II reaction center protein T, PsbT"/>
    <property type="match status" value="1"/>
</dbReference>
<comment type="function">
    <text evidence="1">Found at the monomer-monomer interface of the photosystem II (PS II) dimer, plays a role in assembly and dimerization of PSII. PSII is a light-driven water plastoquinone oxidoreductase, using light energy to abstract electrons from H(2)O, generating a proton gradient subsequently used for ATP formation.</text>
</comment>
<comment type="subunit">
    <text evidence="1">PSII is composed of 1 copy each of membrane proteins PsbA, PsbB, PsbC, PsbD, PsbE, PsbF, PsbH, PsbI, PsbJ, PsbK, PsbL, PsbM, PsbT, PsbY, PsbZ, Psb30/Ycf12, at least 3 peripheral proteins of the oxygen-evolving complex and a large number of cofactors. It forms dimeric complexes.</text>
</comment>
<comment type="subcellular location">
    <subcellularLocation>
        <location evidence="1">Plastid</location>
        <location evidence="1">Chloroplast thylakoid membrane</location>
        <topology evidence="1">Single-pass membrane protein</topology>
    </subcellularLocation>
</comment>
<comment type="similarity">
    <text evidence="1">Belongs to the PsbT family.</text>
</comment>
<name>PSBT_DRIGR</name>
<evidence type="ECO:0000255" key="1">
    <source>
        <dbReference type="HAMAP-Rule" id="MF_00808"/>
    </source>
</evidence>
<accession>Q06GX0</accession>